<gene>
    <name evidence="6" type="primary">fpr</name>
</gene>
<proteinExistence type="evidence at protein level"/>
<keyword id="KW-0002">3D-structure</keyword>
<keyword id="KW-0903">Direct protein sequencing</keyword>
<keyword id="KW-0274">FAD</keyword>
<keyword id="KW-0285">Flavoprotein</keyword>
<keyword id="KW-0521">NADP</keyword>
<keyword id="KW-0547">Nucleotide-binding</keyword>
<keyword id="KW-0560">Oxidoreductase</keyword>
<evidence type="ECO:0000250" key="1">
    <source>
        <dbReference type="UniProtKB" id="P28861"/>
    </source>
</evidence>
<evidence type="ECO:0000255" key="2">
    <source>
        <dbReference type="PROSITE-ProRule" id="PRU00716"/>
    </source>
</evidence>
<evidence type="ECO:0000269" key="3">
    <source>
    </source>
</evidence>
<evidence type="ECO:0000269" key="4">
    <source>
    </source>
</evidence>
<evidence type="ECO:0000269" key="5">
    <source>
    </source>
</evidence>
<evidence type="ECO:0000303" key="6">
    <source>
    </source>
</evidence>
<evidence type="ECO:0000303" key="7">
    <source>
    </source>
</evidence>
<evidence type="ECO:0000305" key="8"/>
<evidence type="ECO:0007829" key="9">
    <source>
        <dbReference type="PDB" id="1A8P"/>
    </source>
</evidence>
<accession>Q44532</accession>
<reference key="1">
    <citation type="journal article" date="1995" name="J. Biol. Chem.">
        <title>Azotobacter vinelandii NADPH:ferredoxin reductase cloning, sequencing, and overexpression.</title>
        <authorList>
            <person name="Isas J.M."/>
            <person name="Yannone S.M."/>
            <person name="Burgess B.K."/>
        </authorList>
    </citation>
    <scope>NUCLEOTIDE SEQUENCE [GENOMIC DNA]</scope>
    <scope>INDUCTION</scope>
    <source>
        <strain>ATCC 13705 / OP1 / DSM 366 / NCIMB 11614 / LMG 3878 / UW</strain>
    </source>
</reference>
<reference key="2">
    <citation type="journal article" date="1994" name="J. Biol. Chem.">
        <title>Purification and characterization of a NADP+/NADPH-specific flavoprotein that is overexpressed in FdI-strains of Azotobacter vinelandii.</title>
        <authorList>
            <person name="Isas J.M."/>
            <person name="Burgess B.K."/>
        </authorList>
    </citation>
    <scope>PROTEIN SEQUENCE OF 1-36</scope>
    <scope>FUNCTION</scope>
    <scope>CATALYTIC ACTIVITY</scope>
    <scope>COFACTOR</scope>
    <scope>SUBUNIT</scope>
    <source>
        <strain>ATCC 13705 / OP1 / DSM 366 / NCIMB 11614 / LMG 3878 / UW</strain>
    </source>
</reference>
<reference key="3">
    <citation type="journal article" date="1998" name="Protein Sci.">
        <title>The crystal structure of NADPH:ferredoxin reductase from Azotobacter vinelandii.</title>
        <authorList>
            <person name="Prasad G.S."/>
            <person name="Kresge N."/>
            <person name="Muhlberg A.B."/>
            <person name="Shaw A."/>
            <person name="Jung Y.S."/>
            <person name="Burgess B.K."/>
            <person name="Stout C.D."/>
        </authorList>
    </citation>
    <scope>X-RAY CRYSTALLOGRAPHY (2.0 ANGSTROMS) IN COMPLEX WITH FAD</scope>
    <scope>COFACTOR</scope>
    <source>
        <strain>LM100</strain>
    </source>
</reference>
<name>FENR_AZOVI</name>
<feature type="chain" id="PRO_0000167639" description="Ferredoxin--NADP reductase">
    <location>
        <begin position="1"/>
        <end position="258"/>
    </location>
</feature>
<feature type="domain" description="FAD-binding FR-type" evidence="2">
    <location>
        <begin position="2"/>
        <end position="102"/>
    </location>
</feature>
<feature type="binding site" evidence="1">
    <location>
        <position position="17"/>
    </location>
    <ligand>
        <name>NADP(+)</name>
        <dbReference type="ChEBI" id="CHEBI:58349"/>
    </ligand>
</feature>
<feature type="binding site" evidence="5">
    <location>
        <begin position="51"/>
        <end position="54"/>
    </location>
    <ligand>
        <name>FAD</name>
        <dbReference type="ChEBI" id="CHEBI:57692"/>
    </ligand>
</feature>
<feature type="binding site" evidence="5">
    <location>
        <begin position="67"/>
        <end position="69"/>
    </location>
    <ligand>
        <name>FAD</name>
        <dbReference type="ChEBI" id="CHEBI:57692"/>
    </ligand>
</feature>
<feature type="binding site" evidence="5">
    <location>
        <begin position="74"/>
        <end position="77"/>
    </location>
    <ligand>
        <name>FAD</name>
        <dbReference type="ChEBI" id="CHEBI:57692"/>
    </ligand>
</feature>
<feature type="binding site" evidence="5">
    <location>
        <position position="117"/>
    </location>
    <ligand>
        <name>FAD</name>
        <dbReference type="ChEBI" id="CHEBI:57692"/>
    </ligand>
</feature>
<feature type="binding site" evidence="1">
    <location>
        <begin position="144"/>
        <end position="145"/>
    </location>
    <ligand>
        <name>NADP(+)</name>
        <dbReference type="ChEBI" id="CHEBI:58349"/>
    </ligand>
</feature>
<feature type="binding site" evidence="1">
    <location>
        <begin position="181"/>
        <end position="182"/>
    </location>
    <ligand>
        <name>NADP(+)</name>
        <dbReference type="ChEBI" id="CHEBI:58349"/>
    </ligand>
</feature>
<feature type="binding site" evidence="1">
    <location>
        <position position="190"/>
    </location>
    <ligand>
        <name>NADP(+)</name>
        <dbReference type="ChEBI" id="CHEBI:58349"/>
    </ligand>
</feature>
<feature type="binding site" evidence="5">
    <location>
        <begin position="254"/>
        <end position="258"/>
    </location>
    <ligand>
        <name>FAD</name>
        <dbReference type="ChEBI" id="CHEBI:57692"/>
    </ligand>
</feature>
<feature type="strand" evidence="9">
    <location>
        <begin position="4"/>
        <end position="16"/>
    </location>
</feature>
<feature type="strand" evidence="9">
    <location>
        <begin position="19"/>
        <end position="25"/>
    </location>
</feature>
<feature type="strand" evidence="9">
    <location>
        <begin position="37"/>
        <end position="44"/>
    </location>
</feature>
<feature type="strand" evidence="9">
    <location>
        <begin position="47"/>
        <end position="54"/>
    </location>
</feature>
<feature type="strand" evidence="9">
    <location>
        <begin position="61"/>
        <end position="69"/>
    </location>
</feature>
<feature type="helix" evidence="9">
    <location>
        <begin position="77"/>
        <end position="80"/>
    </location>
</feature>
<feature type="strand" evidence="9">
    <location>
        <begin position="88"/>
        <end position="93"/>
    </location>
</feature>
<feature type="helix" evidence="9">
    <location>
        <begin position="101"/>
        <end position="103"/>
    </location>
</feature>
<feature type="strand" evidence="9">
    <location>
        <begin position="108"/>
        <end position="115"/>
    </location>
</feature>
<feature type="helix" evidence="9">
    <location>
        <begin position="116"/>
        <end position="119"/>
    </location>
</feature>
<feature type="helix" evidence="9">
    <location>
        <begin position="120"/>
        <end position="125"/>
    </location>
</feature>
<feature type="helix" evidence="9">
    <location>
        <begin position="129"/>
        <end position="134"/>
    </location>
</feature>
<feature type="strand" evidence="9">
    <location>
        <begin position="136"/>
        <end position="146"/>
    </location>
</feature>
<feature type="helix" evidence="9">
    <location>
        <begin position="147"/>
        <end position="149"/>
    </location>
</feature>
<feature type="helix" evidence="9">
    <location>
        <begin position="153"/>
        <end position="157"/>
    </location>
</feature>
<feature type="helix" evidence="9">
    <location>
        <begin position="160"/>
        <end position="162"/>
    </location>
</feature>
<feature type="turn" evidence="9">
    <location>
        <begin position="164"/>
        <end position="166"/>
    </location>
</feature>
<feature type="helix" evidence="9">
    <location>
        <begin position="167"/>
        <end position="173"/>
    </location>
</feature>
<feature type="strand" evidence="9">
    <location>
        <begin position="174"/>
        <end position="183"/>
    </location>
</feature>
<feature type="strand" evidence="9">
    <location>
        <begin position="186"/>
        <end position="189"/>
    </location>
</feature>
<feature type="helix" evidence="9">
    <location>
        <begin position="191"/>
        <end position="196"/>
    </location>
</feature>
<feature type="helix" evidence="9">
    <location>
        <begin position="199"/>
        <end position="204"/>
    </location>
</feature>
<feature type="turn" evidence="9">
    <location>
        <begin position="211"/>
        <end position="213"/>
    </location>
</feature>
<feature type="strand" evidence="9">
    <location>
        <begin position="214"/>
        <end position="220"/>
    </location>
</feature>
<feature type="helix" evidence="9">
    <location>
        <begin position="222"/>
        <end position="234"/>
    </location>
</feature>
<feature type="strand" evidence="9">
    <location>
        <begin position="247"/>
        <end position="255"/>
    </location>
</feature>
<dbReference type="EC" id="1.18.1.2" evidence="4"/>
<dbReference type="EMBL" id="L36319">
    <property type="protein sequence ID" value="AAA83029.1"/>
    <property type="molecule type" value="Genomic_DNA"/>
</dbReference>
<dbReference type="PIR" id="A57432">
    <property type="entry name" value="A57432"/>
</dbReference>
<dbReference type="RefSeq" id="WP_012702363.1">
    <property type="nucleotide sequence ID" value="NZ_FPKM01000003.1"/>
</dbReference>
<dbReference type="PDB" id="1A8P">
    <property type="method" value="X-ray"/>
    <property type="resolution" value="2.00 A"/>
    <property type="chains" value="A=1-258"/>
</dbReference>
<dbReference type="PDBsum" id="1A8P"/>
<dbReference type="SMR" id="Q44532"/>
<dbReference type="DrugBank" id="DB03147">
    <property type="generic name" value="Flavin adenine dinucleotide"/>
</dbReference>
<dbReference type="GeneID" id="88186808"/>
<dbReference type="OMA" id="PAIDRGM"/>
<dbReference type="EvolutionaryTrace" id="Q44532"/>
<dbReference type="GO" id="GO:0004324">
    <property type="term" value="F:ferredoxin-NADP+ reductase activity"/>
    <property type="evidence" value="ECO:0007669"/>
    <property type="project" value="UniProtKB-EC"/>
</dbReference>
<dbReference type="GO" id="GO:0000166">
    <property type="term" value="F:nucleotide binding"/>
    <property type="evidence" value="ECO:0007669"/>
    <property type="project" value="UniProtKB-KW"/>
</dbReference>
<dbReference type="GO" id="GO:0034599">
    <property type="term" value="P:cellular response to oxidative stress"/>
    <property type="evidence" value="ECO:0007669"/>
    <property type="project" value="TreeGrafter"/>
</dbReference>
<dbReference type="GO" id="GO:0042167">
    <property type="term" value="P:heme catabolic process"/>
    <property type="evidence" value="ECO:0007669"/>
    <property type="project" value="TreeGrafter"/>
</dbReference>
<dbReference type="CDD" id="cd06195">
    <property type="entry name" value="FNR1"/>
    <property type="match status" value="1"/>
</dbReference>
<dbReference type="FunFam" id="3.40.50.80:FF:000002">
    <property type="entry name" value="Ferredoxin--NADP reductase"/>
    <property type="match status" value="1"/>
</dbReference>
<dbReference type="FunFam" id="2.40.30.10:FF:000018">
    <property type="entry name" value="Ferredoxin--NADP(+) reductase"/>
    <property type="match status" value="1"/>
</dbReference>
<dbReference type="Gene3D" id="3.40.50.80">
    <property type="entry name" value="Nucleotide-binding domain of ferredoxin-NADP reductase (FNR) module"/>
    <property type="match status" value="1"/>
</dbReference>
<dbReference type="Gene3D" id="2.40.30.10">
    <property type="entry name" value="Translation factors"/>
    <property type="match status" value="1"/>
</dbReference>
<dbReference type="InterPro" id="IPR008333">
    <property type="entry name" value="Cbr1-like_FAD-bd_dom"/>
</dbReference>
<dbReference type="InterPro" id="IPR017927">
    <property type="entry name" value="FAD-bd_FR_type"/>
</dbReference>
<dbReference type="InterPro" id="IPR001709">
    <property type="entry name" value="Flavoprot_Pyr_Nucl_cyt_Rdtase"/>
</dbReference>
<dbReference type="InterPro" id="IPR033892">
    <property type="entry name" value="FNR_bac"/>
</dbReference>
<dbReference type="InterPro" id="IPR039261">
    <property type="entry name" value="FNR_nucleotide-bd"/>
</dbReference>
<dbReference type="InterPro" id="IPR051930">
    <property type="entry name" value="FNR_type-1"/>
</dbReference>
<dbReference type="InterPro" id="IPR001433">
    <property type="entry name" value="OxRdtase_FAD/NAD-bd"/>
</dbReference>
<dbReference type="InterPro" id="IPR017938">
    <property type="entry name" value="Riboflavin_synthase-like_b-brl"/>
</dbReference>
<dbReference type="PANTHER" id="PTHR47878:SF1">
    <property type="entry name" value="FLAVODOXIN_FERREDOXIN--NADP REDUCTASE"/>
    <property type="match status" value="1"/>
</dbReference>
<dbReference type="PANTHER" id="PTHR47878">
    <property type="entry name" value="OXIDOREDUCTASE FAD/NAD(P)-BINDING DOMAIN PROTEIN"/>
    <property type="match status" value="1"/>
</dbReference>
<dbReference type="Pfam" id="PF00970">
    <property type="entry name" value="FAD_binding_6"/>
    <property type="match status" value="1"/>
</dbReference>
<dbReference type="Pfam" id="PF00175">
    <property type="entry name" value="NAD_binding_1"/>
    <property type="match status" value="1"/>
</dbReference>
<dbReference type="PRINTS" id="PR00371">
    <property type="entry name" value="FPNCR"/>
</dbReference>
<dbReference type="SUPFAM" id="SSF52343">
    <property type="entry name" value="Ferredoxin reductase-like, C-terminal NADP-linked domain"/>
    <property type="match status" value="1"/>
</dbReference>
<dbReference type="SUPFAM" id="SSF63380">
    <property type="entry name" value="Riboflavin synthase domain-like"/>
    <property type="match status" value="1"/>
</dbReference>
<dbReference type="PROSITE" id="PS51384">
    <property type="entry name" value="FAD_FR"/>
    <property type="match status" value="1"/>
</dbReference>
<comment type="function">
    <text evidence="4">Transports electrons between ferredoxin and NADPH.</text>
</comment>
<comment type="catalytic activity">
    <reaction evidence="4">
        <text>2 reduced [2Fe-2S]-[ferredoxin] + NADP(+) + H(+) = 2 oxidized [2Fe-2S]-[ferredoxin] + NADPH</text>
        <dbReference type="Rhea" id="RHEA:20125"/>
        <dbReference type="Rhea" id="RHEA-COMP:10000"/>
        <dbReference type="Rhea" id="RHEA-COMP:10001"/>
        <dbReference type="ChEBI" id="CHEBI:15378"/>
        <dbReference type="ChEBI" id="CHEBI:33737"/>
        <dbReference type="ChEBI" id="CHEBI:33738"/>
        <dbReference type="ChEBI" id="CHEBI:57783"/>
        <dbReference type="ChEBI" id="CHEBI:58349"/>
        <dbReference type="EC" id="1.18.1.2"/>
    </reaction>
</comment>
<comment type="cofactor">
    <cofactor evidence="4 5">
        <name>FAD</name>
        <dbReference type="ChEBI" id="CHEBI:57692"/>
    </cofactor>
</comment>
<comment type="subunit">
    <text evidence="4">Monomer.</text>
</comment>
<comment type="induction">
    <text evidence="3">Overexpressed under N(2)-fixing conditions.</text>
</comment>
<comment type="similarity">
    <text evidence="8">Belongs to the ferredoxin--NADP reductase type 1 family.</text>
</comment>
<organism>
    <name type="scientific">Azotobacter vinelandii</name>
    <dbReference type="NCBI Taxonomy" id="354"/>
    <lineage>
        <taxon>Bacteria</taxon>
        <taxon>Pseudomonadati</taxon>
        <taxon>Pseudomonadota</taxon>
        <taxon>Gammaproteobacteria</taxon>
        <taxon>Pseudomonadales</taxon>
        <taxon>Pseudomonadaceae</taxon>
        <taxon>Azotobacter</taxon>
    </lineage>
</organism>
<protein>
    <recommendedName>
        <fullName evidence="8">Ferredoxin--NADP reductase</fullName>
        <shortName evidence="8">FNR</shortName>
        <ecNumber evidence="4">1.18.1.2</ecNumber>
    </recommendedName>
    <alternativeName>
        <fullName evidence="6">NADPH:ferredoxin reductase</fullName>
    </alternativeName>
    <alternativeName>
        <fullName evidence="7">Protein X</fullName>
    </alternativeName>
</protein>
<sequence>MSNLNVERVLSVHHWNDTLFSFKTTRNPSLRFENGQFVMIGLEVDGRPLMRAYSIASPNYEEHLEFFSIKVQNGPLTSRLQHLKEGDELMVSRKPTGTLVTSDLLPGKHLYMLSTGTGLAPFMSLIQDPEVYERFEKVVLIHGVRQVNELAYQQFITEHLPQSEYFGEAVKEKLIYYPTVTRESFHNQGRLTDLMRSGKLFEDIGLPPINPQDDRAMICGSPSMLDESCEVLDGFGLKISPRMGEPGDYLIERAFVEK</sequence>